<reference key="1">
    <citation type="submission" date="2004-11" db="EMBL/GenBank/DDBJ databases">
        <authorList>
            <consortium name="The German cDNA consortium"/>
        </authorList>
    </citation>
    <scope>NUCLEOTIDE SEQUENCE [LARGE SCALE MRNA]</scope>
    <source>
        <tissue>Kidney</tissue>
    </source>
</reference>
<name>C42S1_PONAB</name>
<organism>
    <name type="scientific">Pongo abelii</name>
    <name type="common">Sumatran orangutan</name>
    <name type="synonym">Pongo pygmaeus abelii</name>
    <dbReference type="NCBI Taxonomy" id="9601"/>
    <lineage>
        <taxon>Eukaryota</taxon>
        <taxon>Metazoa</taxon>
        <taxon>Chordata</taxon>
        <taxon>Craniata</taxon>
        <taxon>Vertebrata</taxon>
        <taxon>Euteleostomi</taxon>
        <taxon>Mammalia</taxon>
        <taxon>Eutheria</taxon>
        <taxon>Euarchontoglires</taxon>
        <taxon>Primates</taxon>
        <taxon>Haplorrhini</taxon>
        <taxon>Catarrhini</taxon>
        <taxon>Hominidae</taxon>
        <taxon>Pongo</taxon>
    </lineage>
</organism>
<sequence length="79" mass="8953">MSEFWHKLGCCVVEKPQPKKRRRRIDRTMIGEPMNFVHLTHIGSGEMGAGDGLAMTGAVQEQMRSKGNRDRPWSNSRGL</sequence>
<evidence type="ECO:0000250" key="1"/>
<evidence type="ECO:0000255" key="2">
    <source>
        <dbReference type="PROSITE-ProRule" id="PRU00057"/>
    </source>
</evidence>
<evidence type="ECO:0000256" key="3">
    <source>
        <dbReference type="SAM" id="MobiDB-lite"/>
    </source>
</evidence>
<evidence type="ECO:0000305" key="4"/>
<comment type="function">
    <text evidence="1">Probably involved in the organization of the actin cytoskeleton by acting downstream of CDC42, inducing actin filament assembly. Alters CDC42-induced cell shape changes. In activated T-cells, may play a role in CDC42-mediated F-actin accumulation at the immunological synapse. May play a role in early contractile events in phagocytosis in macrophages (By similarity).</text>
</comment>
<comment type="subunit">
    <text evidence="1">Interacts with CDC42 (in GTP-bound form). Interacts weakly with RAC1 and not at all with RHOA (By similarity).</text>
</comment>
<comment type="subcellular location">
    <subcellularLocation>
        <location evidence="1">Cytoplasm</location>
        <location evidence="1">Cytoskeleton</location>
    </subcellularLocation>
    <subcellularLocation>
        <location evidence="1">Cell membrane</location>
        <topology evidence="1">Lipid-anchor</topology>
    </subcellularLocation>
</comment>
<comment type="domain">
    <text evidence="1">The CRIB domain mediates interaction with CDC42.</text>
</comment>
<comment type="similarity">
    <text evidence="4">Belongs to the CDC42SE/SPEC family.</text>
</comment>
<accession>Q5RDD6</accession>
<proteinExistence type="inferred from homology"/>
<gene>
    <name type="primary">CDC42SE1</name>
</gene>
<protein>
    <recommendedName>
        <fullName>CDC42 small effector protein 1</fullName>
    </recommendedName>
</protein>
<dbReference type="EMBL" id="CR857977">
    <property type="protein sequence ID" value="CAH90221.1"/>
    <property type="molecule type" value="mRNA"/>
</dbReference>
<dbReference type="RefSeq" id="NP_001125089.1">
    <property type="nucleotide sequence ID" value="NM_001131617.1"/>
</dbReference>
<dbReference type="GeneID" id="100171971"/>
<dbReference type="KEGG" id="pon:100171971"/>
<dbReference type="CTD" id="56882"/>
<dbReference type="eggNOG" id="ENOG502S499">
    <property type="taxonomic scope" value="Eukaryota"/>
</dbReference>
<dbReference type="InParanoid" id="Q5RDD6"/>
<dbReference type="OrthoDB" id="5559822at2759"/>
<dbReference type="Proteomes" id="UP000001595">
    <property type="component" value="Unplaced"/>
</dbReference>
<dbReference type="GO" id="GO:0005737">
    <property type="term" value="C:cytoplasm"/>
    <property type="evidence" value="ECO:0007669"/>
    <property type="project" value="UniProtKB-KW"/>
</dbReference>
<dbReference type="GO" id="GO:0005856">
    <property type="term" value="C:cytoskeleton"/>
    <property type="evidence" value="ECO:0007669"/>
    <property type="project" value="UniProtKB-SubCell"/>
</dbReference>
<dbReference type="GO" id="GO:0005886">
    <property type="term" value="C:plasma membrane"/>
    <property type="evidence" value="ECO:0007669"/>
    <property type="project" value="UniProtKB-SubCell"/>
</dbReference>
<dbReference type="GO" id="GO:0031267">
    <property type="term" value="F:small GTPase binding"/>
    <property type="evidence" value="ECO:0007669"/>
    <property type="project" value="InterPro"/>
</dbReference>
<dbReference type="GO" id="GO:0006909">
    <property type="term" value="P:phagocytosis"/>
    <property type="evidence" value="ECO:0007669"/>
    <property type="project" value="UniProtKB-KW"/>
</dbReference>
<dbReference type="GO" id="GO:0008360">
    <property type="term" value="P:regulation of cell shape"/>
    <property type="evidence" value="ECO:0007669"/>
    <property type="project" value="UniProtKB-KW"/>
</dbReference>
<dbReference type="GO" id="GO:0035023">
    <property type="term" value="P:regulation of Rho protein signal transduction"/>
    <property type="evidence" value="ECO:0007669"/>
    <property type="project" value="InterPro"/>
</dbReference>
<dbReference type="FunFam" id="3.90.810.10:FF:000015">
    <property type="entry name" value="CDC42 small effector protein 1"/>
    <property type="match status" value="1"/>
</dbReference>
<dbReference type="Gene3D" id="3.90.810.10">
    <property type="entry name" value="CRIB domain"/>
    <property type="match status" value="1"/>
</dbReference>
<dbReference type="InterPro" id="IPR000095">
    <property type="entry name" value="CRIB_dom"/>
</dbReference>
<dbReference type="InterPro" id="IPR036936">
    <property type="entry name" value="CRIB_dom_sf"/>
</dbReference>
<dbReference type="InterPro" id="IPR039056">
    <property type="entry name" value="SPEC"/>
</dbReference>
<dbReference type="PANTHER" id="PTHR13502:SF3">
    <property type="entry name" value="CDC42 SMALL EFFECTOR PROTEIN 1"/>
    <property type="match status" value="1"/>
</dbReference>
<dbReference type="PANTHER" id="PTHR13502">
    <property type="entry name" value="CDC42 SMALL EFFECTOR PROTEIN HOMOLOG"/>
    <property type="match status" value="1"/>
</dbReference>
<dbReference type="PROSITE" id="PS50108">
    <property type="entry name" value="CRIB"/>
    <property type="match status" value="1"/>
</dbReference>
<feature type="chain" id="PRO_0000334631" description="CDC42 small effector protein 1">
    <location>
        <begin position="1"/>
        <end position="79"/>
    </location>
</feature>
<feature type="domain" description="CRIB" evidence="2">
    <location>
        <begin position="30"/>
        <end position="43"/>
    </location>
</feature>
<feature type="region of interest" description="Disordered" evidence="3">
    <location>
        <begin position="48"/>
        <end position="79"/>
    </location>
</feature>
<feature type="compositionally biased region" description="Basic and acidic residues" evidence="3">
    <location>
        <begin position="63"/>
        <end position="72"/>
    </location>
</feature>
<feature type="lipid moiety-binding region" description="S-palmitoyl cysteine" evidence="1">
    <location>
        <position position="10"/>
    </location>
</feature>
<feature type="lipid moiety-binding region" description="S-palmitoyl cysteine" evidence="1">
    <location>
        <position position="11"/>
    </location>
</feature>
<keyword id="KW-1003">Cell membrane</keyword>
<keyword id="KW-0133">Cell shape</keyword>
<keyword id="KW-0963">Cytoplasm</keyword>
<keyword id="KW-0206">Cytoskeleton</keyword>
<keyword id="KW-0449">Lipoprotein</keyword>
<keyword id="KW-0472">Membrane</keyword>
<keyword id="KW-0564">Palmitate</keyword>
<keyword id="KW-0581">Phagocytosis</keyword>
<keyword id="KW-1185">Reference proteome</keyword>